<accession>Q31RR3</accession>
<organism>
    <name type="scientific">Synechococcus elongatus (strain ATCC 33912 / PCC 7942 / FACHB-805)</name>
    <name type="common">Anacystis nidulans R2</name>
    <dbReference type="NCBI Taxonomy" id="1140"/>
    <lineage>
        <taxon>Bacteria</taxon>
        <taxon>Bacillati</taxon>
        <taxon>Cyanobacteriota</taxon>
        <taxon>Cyanophyceae</taxon>
        <taxon>Synechococcales</taxon>
        <taxon>Synechococcaceae</taxon>
        <taxon>Synechococcus</taxon>
    </lineage>
</organism>
<protein>
    <recommendedName>
        <fullName evidence="1">Protein PsbN</fullName>
    </recommendedName>
</protein>
<reference key="1">
    <citation type="submission" date="2005-08" db="EMBL/GenBank/DDBJ databases">
        <title>Complete sequence of chromosome 1 of Synechococcus elongatus PCC 7942.</title>
        <authorList>
            <consortium name="US DOE Joint Genome Institute"/>
            <person name="Copeland A."/>
            <person name="Lucas S."/>
            <person name="Lapidus A."/>
            <person name="Barry K."/>
            <person name="Detter J.C."/>
            <person name="Glavina T."/>
            <person name="Hammon N."/>
            <person name="Israni S."/>
            <person name="Pitluck S."/>
            <person name="Schmutz J."/>
            <person name="Larimer F."/>
            <person name="Land M."/>
            <person name="Kyrpides N."/>
            <person name="Lykidis A."/>
            <person name="Golden S."/>
            <person name="Richardson P."/>
        </authorList>
    </citation>
    <scope>NUCLEOTIDE SEQUENCE [LARGE SCALE GENOMIC DNA]</scope>
    <source>
        <strain>ATCC 33912 / PCC 7942 / FACHB-805</strain>
    </source>
</reference>
<name>PSBN_SYNE7</name>
<dbReference type="EMBL" id="CP000100">
    <property type="protein sequence ID" value="ABB56256.1"/>
    <property type="molecule type" value="Genomic_DNA"/>
</dbReference>
<dbReference type="RefSeq" id="WP_011243601.1">
    <property type="nucleotide sequence ID" value="NZ_JACJTX010000002.1"/>
</dbReference>
<dbReference type="SMR" id="Q31RR3"/>
<dbReference type="STRING" id="1140.Synpcc7942_0224"/>
<dbReference type="PaxDb" id="1140-Synpcc7942_0224"/>
<dbReference type="GeneID" id="72429038"/>
<dbReference type="KEGG" id="syf:Synpcc7942_0224"/>
<dbReference type="eggNOG" id="ENOG50339MH">
    <property type="taxonomic scope" value="Bacteria"/>
</dbReference>
<dbReference type="HOGENOM" id="CLU_205504_1_0_3"/>
<dbReference type="OrthoDB" id="532561at2"/>
<dbReference type="BioCyc" id="MetaCyc:SYNPCC7942_0224-MONOMER"/>
<dbReference type="BioCyc" id="SYNEL:SYNPCC7942_0224-MONOMER"/>
<dbReference type="Proteomes" id="UP000889800">
    <property type="component" value="Chromosome"/>
</dbReference>
<dbReference type="GO" id="GO:0031676">
    <property type="term" value="C:plasma membrane-derived thylakoid membrane"/>
    <property type="evidence" value="ECO:0007669"/>
    <property type="project" value="UniProtKB-SubCell"/>
</dbReference>
<dbReference type="GO" id="GO:0015979">
    <property type="term" value="P:photosynthesis"/>
    <property type="evidence" value="ECO:0007669"/>
    <property type="project" value="InterPro"/>
</dbReference>
<dbReference type="HAMAP" id="MF_00293">
    <property type="entry name" value="PSII_PsbN"/>
    <property type="match status" value="1"/>
</dbReference>
<dbReference type="InterPro" id="IPR003398">
    <property type="entry name" value="PSII_PsbN"/>
</dbReference>
<dbReference type="NCBIfam" id="NF009650">
    <property type="entry name" value="PRK13183.1"/>
    <property type="match status" value="1"/>
</dbReference>
<dbReference type="PANTHER" id="PTHR35326">
    <property type="entry name" value="PROTEIN PSBN"/>
    <property type="match status" value="1"/>
</dbReference>
<dbReference type="PANTHER" id="PTHR35326:SF3">
    <property type="entry name" value="PROTEIN PSBN"/>
    <property type="match status" value="1"/>
</dbReference>
<dbReference type="Pfam" id="PF02468">
    <property type="entry name" value="PsbN"/>
    <property type="match status" value="1"/>
</dbReference>
<sequence length="46" mass="4988">MMEASPGLSIAITFAVILLALTGFSIYTSFGPPSKQLEDPFEDHED</sequence>
<comment type="function">
    <text evidence="1">May play a role in photosystem I and II biogenesis.</text>
</comment>
<comment type="subcellular location">
    <subcellularLocation>
        <location evidence="1">Cellular thylakoid membrane</location>
        <topology evidence="1">Single-pass membrane protein</topology>
    </subcellularLocation>
</comment>
<comment type="similarity">
    <text evidence="1">Belongs to the PsbN family.</text>
</comment>
<comment type="caution">
    <text evidence="1">Originally thought to be a component of PSII; based on experiments in Synechocystis, N.tabacum and barley, and its absence from PSII in T.elongatus and T.vulcanus, this is probably not true.</text>
</comment>
<evidence type="ECO:0000255" key="1">
    <source>
        <dbReference type="HAMAP-Rule" id="MF_00293"/>
    </source>
</evidence>
<proteinExistence type="inferred from homology"/>
<gene>
    <name evidence="1" type="primary">psbN</name>
    <name type="ordered locus">Synpcc7942_0224</name>
</gene>
<keyword id="KW-0472">Membrane</keyword>
<keyword id="KW-1185">Reference proteome</keyword>
<keyword id="KW-0793">Thylakoid</keyword>
<keyword id="KW-0812">Transmembrane</keyword>
<keyword id="KW-1133">Transmembrane helix</keyword>
<feature type="chain" id="PRO_0000232793" description="Protein PsbN">
    <location>
        <begin position="1"/>
        <end position="46"/>
    </location>
</feature>
<feature type="transmembrane region" description="Helical" evidence="1">
    <location>
        <begin position="7"/>
        <end position="27"/>
    </location>
</feature>